<evidence type="ECO:0000255" key="1">
    <source>
        <dbReference type="HAMAP-Rule" id="MF_01300"/>
    </source>
</evidence>
<feature type="chain" id="PRO_1000165286" description="C4-dicarboxylate transport protein">
    <location>
        <begin position="1"/>
        <end position="428"/>
    </location>
</feature>
<feature type="transmembrane region" description="Helical" evidence="1">
    <location>
        <begin position="8"/>
        <end position="28"/>
    </location>
</feature>
<feature type="transmembrane region" description="Helical" evidence="1">
    <location>
        <begin position="44"/>
        <end position="64"/>
    </location>
</feature>
<feature type="transmembrane region" description="Helical" evidence="1">
    <location>
        <begin position="76"/>
        <end position="96"/>
    </location>
</feature>
<feature type="transmembrane region" description="Helical" evidence="1">
    <location>
        <begin position="142"/>
        <end position="162"/>
    </location>
</feature>
<feature type="transmembrane region" description="Helical" evidence="1">
    <location>
        <begin position="184"/>
        <end position="204"/>
    </location>
</feature>
<feature type="transmembrane region" description="Helical" evidence="1">
    <location>
        <begin position="222"/>
        <end position="242"/>
    </location>
</feature>
<feature type="transmembrane region" description="Helical" evidence="1">
    <location>
        <begin position="326"/>
        <end position="346"/>
    </location>
</feature>
<feature type="transmembrane region" description="Helical" evidence="1">
    <location>
        <begin position="352"/>
        <end position="372"/>
    </location>
</feature>
<reference key="1">
    <citation type="journal article" date="2009" name="J. Bacteriol.">
        <title>Complete genome sequence and comparative genome analysis of enteropathogenic Escherichia coli O127:H6 strain E2348/69.</title>
        <authorList>
            <person name="Iguchi A."/>
            <person name="Thomson N.R."/>
            <person name="Ogura Y."/>
            <person name="Saunders D."/>
            <person name="Ooka T."/>
            <person name="Henderson I.R."/>
            <person name="Harris D."/>
            <person name="Asadulghani M."/>
            <person name="Kurokawa K."/>
            <person name="Dean P."/>
            <person name="Kenny B."/>
            <person name="Quail M.A."/>
            <person name="Thurston S."/>
            <person name="Dougan G."/>
            <person name="Hayashi T."/>
            <person name="Parkhill J."/>
            <person name="Frankel G."/>
        </authorList>
    </citation>
    <scope>NUCLEOTIDE SEQUENCE [LARGE SCALE GENOMIC DNA]</scope>
    <source>
        <strain>E2348/69 / EPEC</strain>
    </source>
</reference>
<organism>
    <name type="scientific">Escherichia coli O127:H6 (strain E2348/69 / EPEC)</name>
    <dbReference type="NCBI Taxonomy" id="574521"/>
    <lineage>
        <taxon>Bacteria</taxon>
        <taxon>Pseudomonadati</taxon>
        <taxon>Pseudomonadota</taxon>
        <taxon>Gammaproteobacteria</taxon>
        <taxon>Enterobacterales</taxon>
        <taxon>Enterobacteriaceae</taxon>
        <taxon>Escherichia</taxon>
    </lineage>
</organism>
<proteinExistence type="inferred from homology"/>
<name>DCTA_ECO27</name>
<sequence>MKTSLFKSLYFQVLTAIAIGILLGHFYPEIGEQMKPLGDGFVKLIKMIIAPVIFCTVVTGIAGMESMKAVGRTGAVALLYFEIVSTIALIIGLIIVNVVQPGAGMNVDPTTLDAKAVAVYADQAKDQGIVAFIMDVIPASVIGAFASGNILQVLLFAVLFGFALHRLGSKGQLIFNVIESFSQVIFGIINMIMRLAPIGAFGAMAFTIGKYGVGTLVQLGQLIICFYITCILFVVLVLGSIAKATGFSIFKFIRYIREELLIVLGTSSSESALPRMLDKMEKLGCRKSVVGLVIPTGYSFNLDGTSIYLTMAAVFIAQATNSQMDIVHQITLLIVLLLSSKGAAGVTGSGFIVLAATLSAVGHLPVAGLALILGIDRFMSEARALTNLVGNGVATIVVAKWVKELDHKKLDDVLNNRAPDGKTHELSS</sequence>
<protein>
    <recommendedName>
        <fullName evidence="1">C4-dicarboxylate transport protein</fullName>
    </recommendedName>
</protein>
<gene>
    <name evidence="1" type="primary">dctA</name>
    <name type="ordered locus">E2348C_3770</name>
</gene>
<dbReference type="EMBL" id="FM180568">
    <property type="protein sequence ID" value="CAS11318.1"/>
    <property type="molecule type" value="Genomic_DNA"/>
</dbReference>
<dbReference type="RefSeq" id="WP_000858221.1">
    <property type="nucleotide sequence ID" value="NC_011601.1"/>
</dbReference>
<dbReference type="SMR" id="B7UL81"/>
<dbReference type="KEGG" id="ecg:E2348C_3770"/>
<dbReference type="HOGENOM" id="CLU_019375_7_0_6"/>
<dbReference type="Proteomes" id="UP000008205">
    <property type="component" value="Chromosome"/>
</dbReference>
<dbReference type="GO" id="GO:0005886">
    <property type="term" value="C:plasma membrane"/>
    <property type="evidence" value="ECO:0007669"/>
    <property type="project" value="UniProtKB-SubCell"/>
</dbReference>
<dbReference type="GO" id="GO:0015138">
    <property type="term" value="F:fumarate transmembrane transporter activity"/>
    <property type="evidence" value="ECO:0007669"/>
    <property type="project" value="TreeGrafter"/>
</dbReference>
<dbReference type="GO" id="GO:0015366">
    <property type="term" value="F:malate:proton symporter activity"/>
    <property type="evidence" value="ECO:0007669"/>
    <property type="project" value="TreeGrafter"/>
</dbReference>
<dbReference type="GO" id="GO:0015141">
    <property type="term" value="F:succinate transmembrane transporter activity"/>
    <property type="evidence" value="ECO:0007669"/>
    <property type="project" value="TreeGrafter"/>
</dbReference>
<dbReference type="GO" id="GO:0070778">
    <property type="term" value="P:L-aspartate transmembrane transport"/>
    <property type="evidence" value="ECO:0007669"/>
    <property type="project" value="TreeGrafter"/>
</dbReference>
<dbReference type="FunFam" id="1.10.3860.10:FF:000001">
    <property type="entry name" value="C4-dicarboxylate transport protein"/>
    <property type="match status" value="1"/>
</dbReference>
<dbReference type="Gene3D" id="1.10.3860.10">
    <property type="entry name" value="Sodium:dicarboxylate symporter"/>
    <property type="match status" value="1"/>
</dbReference>
<dbReference type="HAMAP" id="MF_01300">
    <property type="entry name" value="C4_dicarb_transport"/>
    <property type="match status" value="1"/>
</dbReference>
<dbReference type="InterPro" id="IPR023954">
    <property type="entry name" value="C4_dicarb_transport"/>
</dbReference>
<dbReference type="InterPro" id="IPR001991">
    <property type="entry name" value="Na-dicarboxylate_symporter"/>
</dbReference>
<dbReference type="InterPro" id="IPR018107">
    <property type="entry name" value="Na-dicarboxylate_symporter_CS"/>
</dbReference>
<dbReference type="InterPro" id="IPR036458">
    <property type="entry name" value="Na:dicarbo_symporter_sf"/>
</dbReference>
<dbReference type="NCBIfam" id="NF002461">
    <property type="entry name" value="PRK01663.1"/>
    <property type="match status" value="1"/>
</dbReference>
<dbReference type="NCBIfam" id="NF009587">
    <property type="entry name" value="PRK13027.1"/>
    <property type="match status" value="1"/>
</dbReference>
<dbReference type="PANTHER" id="PTHR42865:SF1">
    <property type="entry name" value="AEROBIC C4-DICARBOXYLATE TRANSPORT PROTEIN"/>
    <property type="match status" value="1"/>
</dbReference>
<dbReference type="PANTHER" id="PTHR42865">
    <property type="entry name" value="PROTON/GLUTAMATE-ASPARTATE SYMPORTER"/>
    <property type="match status" value="1"/>
</dbReference>
<dbReference type="Pfam" id="PF00375">
    <property type="entry name" value="SDF"/>
    <property type="match status" value="1"/>
</dbReference>
<dbReference type="PRINTS" id="PR00173">
    <property type="entry name" value="EDTRNSPORT"/>
</dbReference>
<dbReference type="SUPFAM" id="SSF118215">
    <property type="entry name" value="Proton glutamate symport protein"/>
    <property type="match status" value="1"/>
</dbReference>
<dbReference type="PROSITE" id="PS00713">
    <property type="entry name" value="NA_DICARBOXYL_SYMP_1"/>
    <property type="match status" value="1"/>
</dbReference>
<dbReference type="PROSITE" id="PS00714">
    <property type="entry name" value="NA_DICARBOXYL_SYMP_2"/>
    <property type="match status" value="1"/>
</dbReference>
<keyword id="KW-0997">Cell inner membrane</keyword>
<keyword id="KW-1003">Cell membrane</keyword>
<keyword id="KW-0472">Membrane</keyword>
<keyword id="KW-1185">Reference proteome</keyword>
<keyword id="KW-0769">Symport</keyword>
<keyword id="KW-0812">Transmembrane</keyword>
<keyword id="KW-1133">Transmembrane helix</keyword>
<keyword id="KW-0813">Transport</keyword>
<accession>B7UL81</accession>
<comment type="function">
    <text evidence="1">Responsible for the transport of dicarboxylates such as succinate, fumarate, and malate from the periplasm across the membrane.</text>
</comment>
<comment type="subcellular location">
    <subcellularLocation>
        <location evidence="1">Cell inner membrane</location>
        <topology evidence="1">Multi-pass membrane protein</topology>
    </subcellularLocation>
</comment>
<comment type="similarity">
    <text evidence="1">Belongs to the dicarboxylate/amino acid:cation symporter (DAACS) (TC 2.A.23) family.</text>
</comment>